<proteinExistence type="inferred from homology"/>
<accession>P07605</accession>
<accession>Q9Q910</accession>
<reference key="1">
    <citation type="journal article" date="1986" name="J. Virol.">
        <title>Identification and nucleotide sequence of the thymidine kinase gene of Shope fibroma virus.</title>
        <authorList>
            <person name="Upton C."/>
            <person name="McFadden G."/>
        </authorList>
    </citation>
    <scope>NUCLEOTIDE SEQUENCE [GENOMIC DNA]</scope>
</reference>
<reference key="2">
    <citation type="journal article" date="1986" name="Virology">
        <title>Tumorigenic poxviruses: analysis of viral DNA sequences implicated in the tumorigenicity of Shope fibroma virus and malignant rabbit virus.</title>
        <authorList>
            <person name="Upton C."/>
            <person name="McFadden G."/>
        </authorList>
    </citation>
    <scope>NUCLEOTIDE SEQUENCE [GENOMIC DNA]</scope>
</reference>
<reference key="3">
    <citation type="journal article" date="1991" name="Virology">
        <title>Sequence and analysis of a portion of the genomes of Shope fibroma virus and malignant rabbit fibroma virus that is important for viral replication in lymphocytes.</title>
        <authorList>
            <person name="Strayer D.S."/>
            <person name="Jerng H.H."/>
            <person name="O'Connor K."/>
        </authorList>
    </citation>
    <scope>NUCLEOTIDE SEQUENCE [GENOMIC DNA]</scope>
</reference>
<reference key="4">
    <citation type="journal article" date="1999" name="Virology">
        <title>The complete genome sequence of shope (Rabbit) fibroma virus.</title>
        <authorList>
            <person name="Willer D.O."/>
            <person name="McFadden G."/>
            <person name="Evans D.H."/>
        </authorList>
    </citation>
    <scope>NUCLEOTIDE SEQUENCE [LARGE SCALE GENOMIC DNA]</scope>
</reference>
<organismHost>
    <name type="scientific">Oryctolagus cuniculus</name>
    <name type="common">Rabbit</name>
    <dbReference type="NCBI Taxonomy" id="9986"/>
</organismHost>
<feature type="chain" id="PRO_0000174935" description="Thymidine kinase">
    <location>
        <begin position="1"/>
        <end position="178"/>
    </location>
</feature>
<feature type="active site" description="Proton acceptor" evidence="2">
    <location>
        <position position="85"/>
    </location>
</feature>
<feature type="binding site" evidence="1">
    <location>
        <begin position="13"/>
        <end position="20"/>
    </location>
    <ligand>
        <name>ATP</name>
        <dbReference type="ChEBI" id="CHEBI:30616"/>
    </ligand>
</feature>
<feature type="binding site" evidence="1">
    <location>
        <position position="115"/>
    </location>
    <ligand>
        <name>substrate</name>
    </ligand>
</feature>
<feature type="binding site" evidence="1">
    <location>
        <position position="140"/>
    </location>
    <ligand>
        <name>Zn(2+)</name>
        <dbReference type="ChEBI" id="CHEBI:29105"/>
    </ligand>
</feature>
<feature type="binding site" evidence="1">
    <location>
        <position position="143"/>
    </location>
    <ligand>
        <name>Zn(2+)</name>
        <dbReference type="ChEBI" id="CHEBI:29105"/>
    </ligand>
</feature>
<feature type="binding site" evidence="1">
    <location>
        <begin position="159"/>
        <end position="163"/>
    </location>
    <ligand>
        <name>substrate</name>
    </ligand>
</feature>
<feature type="binding site" evidence="1">
    <location>
        <position position="172"/>
    </location>
    <ligand>
        <name>Zn(2+)</name>
        <dbReference type="ChEBI" id="CHEBI:29105"/>
    </ligand>
</feature>
<feature type="binding site" evidence="1">
    <location>
        <position position="175"/>
    </location>
    <ligand>
        <name>Zn(2+)</name>
        <dbReference type="ChEBI" id="CHEBI:29105"/>
    </ligand>
</feature>
<feature type="sequence conflict" description="In Ref. 1; AAA47227." evidence="3" ref="1">
    <location>
        <begin position="2"/>
        <end position="3"/>
    </location>
</feature>
<feature type="sequence conflict" description="In Ref. 1; AAA47227." evidence="3" ref="1">
    <original>A</original>
    <variation>R</variation>
    <location>
        <position position="102"/>
    </location>
</feature>
<gene>
    <name type="primary">TK</name>
    <name type="ORF">s061R</name>
</gene>
<evidence type="ECO:0000250" key="1"/>
<evidence type="ECO:0000255" key="2"/>
<evidence type="ECO:0000305" key="3"/>
<comment type="catalytic activity">
    <reaction>
        <text>thymidine + ATP = dTMP + ADP + H(+)</text>
        <dbReference type="Rhea" id="RHEA:19129"/>
        <dbReference type="ChEBI" id="CHEBI:15378"/>
        <dbReference type="ChEBI" id="CHEBI:17748"/>
        <dbReference type="ChEBI" id="CHEBI:30616"/>
        <dbReference type="ChEBI" id="CHEBI:63528"/>
        <dbReference type="ChEBI" id="CHEBI:456216"/>
        <dbReference type="EC" id="2.7.1.21"/>
    </reaction>
</comment>
<comment type="similarity">
    <text evidence="3">Belongs to the thymidine kinase family.</text>
</comment>
<keyword id="KW-0067">ATP-binding</keyword>
<keyword id="KW-0237">DNA synthesis</keyword>
<keyword id="KW-0418">Kinase</keyword>
<keyword id="KW-0479">Metal-binding</keyword>
<keyword id="KW-0547">Nucleotide-binding</keyword>
<keyword id="KW-1185">Reference proteome</keyword>
<keyword id="KW-0808">Transferase</keyword>
<keyword id="KW-0862">Zinc</keyword>
<protein>
    <recommendedName>
        <fullName>Thymidine kinase</fullName>
        <ecNumber>2.7.1.21</ecNumber>
    </recommendedName>
</protein>
<dbReference type="EC" id="2.7.1.21"/>
<dbReference type="EMBL" id="M14493">
    <property type="protein sequence ID" value="AAA47227.1"/>
    <property type="molecule type" value="Genomic_DNA"/>
</dbReference>
<dbReference type="EMBL" id="AF170722">
    <property type="protein sequence ID" value="AAF17943.1"/>
    <property type="molecule type" value="Genomic_DNA"/>
</dbReference>
<dbReference type="PIR" id="A26102">
    <property type="entry name" value="KIVZSF"/>
</dbReference>
<dbReference type="RefSeq" id="NP_051950.1">
    <property type="nucleotide sequence ID" value="NC_001266.1"/>
</dbReference>
<dbReference type="SMR" id="P07605"/>
<dbReference type="KEGG" id="vg:1486904"/>
<dbReference type="Proteomes" id="UP000000868">
    <property type="component" value="Segment"/>
</dbReference>
<dbReference type="GO" id="GO:0005524">
    <property type="term" value="F:ATP binding"/>
    <property type="evidence" value="ECO:0007669"/>
    <property type="project" value="UniProtKB-KW"/>
</dbReference>
<dbReference type="GO" id="GO:0046872">
    <property type="term" value="F:metal ion binding"/>
    <property type="evidence" value="ECO:0007669"/>
    <property type="project" value="UniProtKB-KW"/>
</dbReference>
<dbReference type="GO" id="GO:0004797">
    <property type="term" value="F:thymidine kinase activity"/>
    <property type="evidence" value="ECO:0007669"/>
    <property type="project" value="UniProtKB-EC"/>
</dbReference>
<dbReference type="GO" id="GO:0071897">
    <property type="term" value="P:DNA biosynthetic process"/>
    <property type="evidence" value="ECO:0007669"/>
    <property type="project" value="UniProtKB-KW"/>
</dbReference>
<dbReference type="GO" id="GO:0046104">
    <property type="term" value="P:thymidine metabolic process"/>
    <property type="evidence" value="ECO:0007669"/>
    <property type="project" value="TreeGrafter"/>
</dbReference>
<dbReference type="FunFam" id="3.30.60.20:FF:000028">
    <property type="entry name" value="Thymidine kinase"/>
    <property type="match status" value="1"/>
</dbReference>
<dbReference type="FunFam" id="3.40.50.300:FF:001270">
    <property type="entry name" value="Thymidine kinase"/>
    <property type="match status" value="1"/>
</dbReference>
<dbReference type="Gene3D" id="3.30.60.20">
    <property type="match status" value="1"/>
</dbReference>
<dbReference type="Gene3D" id="3.40.50.300">
    <property type="entry name" value="P-loop containing nucleotide triphosphate hydrolases"/>
    <property type="match status" value="1"/>
</dbReference>
<dbReference type="InterPro" id="IPR027417">
    <property type="entry name" value="P-loop_NTPase"/>
</dbReference>
<dbReference type="InterPro" id="IPR001267">
    <property type="entry name" value="Thymidine_kinase"/>
</dbReference>
<dbReference type="InterPro" id="IPR020633">
    <property type="entry name" value="Thymidine_kinase_CS"/>
</dbReference>
<dbReference type="PANTHER" id="PTHR11441">
    <property type="entry name" value="THYMIDINE KINASE"/>
    <property type="match status" value="1"/>
</dbReference>
<dbReference type="PANTHER" id="PTHR11441:SF0">
    <property type="entry name" value="THYMIDINE KINASE, CYTOSOLIC"/>
    <property type="match status" value="1"/>
</dbReference>
<dbReference type="Pfam" id="PF00265">
    <property type="entry name" value="TK"/>
    <property type="match status" value="1"/>
</dbReference>
<dbReference type="PIRSF" id="PIRSF035805">
    <property type="entry name" value="TK_cell"/>
    <property type="match status" value="1"/>
</dbReference>
<dbReference type="SUPFAM" id="SSF57716">
    <property type="entry name" value="Glucocorticoid receptor-like (DNA-binding domain)"/>
    <property type="match status" value="1"/>
</dbReference>
<dbReference type="SUPFAM" id="SSF52540">
    <property type="entry name" value="P-loop containing nucleoside triphosphate hydrolases"/>
    <property type="match status" value="1"/>
</dbReference>
<dbReference type="PROSITE" id="PS00603">
    <property type="entry name" value="TK_CELLULAR_TYPE"/>
    <property type="match status" value="1"/>
</dbReference>
<sequence length="178" mass="19896">MTMYGGHIHLIIGPMFAGKSTELIRLVRRYQIAKHKCLVVKYEKDIRYGNGVCTHDNMSITAVCTPSLDKIDSVAENAEVIGIDEGQFFPNIATFCERMANAGKVLIVAALDGTFQRKPFSNISELIPLAENVTKLNAVCMYCYKNGSFSKRLGDKMEIEVIGGSDKYKSVCRKCYFF</sequence>
<name>KITH_RFVKA</name>
<organism>
    <name type="scientific">Rabbit fibroma virus (strain Kasza)</name>
    <name type="common">RFV</name>
    <name type="synonym">Shope fibroma virus (strain Kasza)</name>
    <dbReference type="NCBI Taxonomy" id="10272"/>
    <lineage>
        <taxon>Viruses</taxon>
        <taxon>Varidnaviria</taxon>
        <taxon>Bamfordvirae</taxon>
        <taxon>Nucleocytoviricota</taxon>
        <taxon>Pokkesviricetes</taxon>
        <taxon>Chitovirales</taxon>
        <taxon>Poxviridae</taxon>
        <taxon>Chordopoxvirinae</taxon>
        <taxon>Leporipoxvirus</taxon>
        <taxon>Rabbit fibroma virus</taxon>
    </lineage>
</organism>